<name>SHLD2_PONAB</name>
<dbReference type="EMBL" id="CR858248">
    <property type="protein sequence ID" value="CAH90485.1"/>
    <property type="molecule type" value="mRNA"/>
</dbReference>
<dbReference type="RefSeq" id="NP_001125252.1">
    <property type="nucleotide sequence ID" value="NM_001131780.1"/>
</dbReference>
<dbReference type="FunCoup" id="Q5RCM2">
    <property type="interactions" value="1348"/>
</dbReference>
<dbReference type="STRING" id="9601.ENSPPYP00000003293"/>
<dbReference type="GeneID" id="100172149"/>
<dbReference type="KEGG" id="pon:100172149"/>
<dbReference type="CTD" id="54537"/>
<dbReference type="eggNOG" id="ENOG502QW94">
    <property type="taxonomic scope" value="Eukaryota"/>
</dbReference>
<dbReference type="InParanoid" id="Q5RCM2"/>
<dbReference type="OrthoDB" id="5963585at2759"/>
<dbReference type="Proteomes" id="UP000001595">
    <property type="component" value="Unplaced"/>
</dbReference>
<dbReference type="GO" id="GO:0005634">
    <property type="term" value="C:nucleus"/>
    <property type="evidence" value="ECO:0007669"/>
    <property type="project" value="TreeGrafter"/>
</dbReference>
<dbReference type="GO" id="GO:0035861">
    <property type="term" value="C:site of double-strand break"/>
    <property type="evidence" value="ECO:0007669"/>
    <property type="project" value="TreeGrafter"/>
</dbReference>
<dbReference type="GO" id="GO:0006281">
    <property type="term" value="P:DNA repair"/>
    <property type="evidence" value="ECO:0007669"/>
    <property type="project" value="UniProtKB-KW"/>
</dbReference>
<dbReference type="GO" id="GO:0010569">
    <property type="term" value="P:regulation of double-strand break repair via homologous recombination"/>
    <property type="evidence" value="ECO:0007669"/>
    <property type="project" value="TreeGrafter"/>
</dbReference>
<dbReference type="InterPro" id="IPR029715">
    <property type="entry name" value="FAM35A"/>
</dbReference>
<dbReference type="InterPro" id="IPR031589">
    <property type="entry name" value="SHLD2_C"/>
</dbReference>
<dbReference type="InterPro" id="IPR049507">
    <property type="entry name" value="SHLD2_OB1"/>
</dbReference>
<dbReference type="InterPro" id="IPR053944">
    <property type="entry name" value="SHLD2_OB2"/>
</dbReference>
<dbReference type="PANTHER" id="PTHR14495">
    <property type="entry name" value="SHIELDIN COMPLEX SUBUNIT 2"/>
    <property type="match status" value="1"/>
</dbReference>
<dbReference type="PANTHER" id="PTHR14495:SF2">
    <property type="entry name" value="SHIELDIN COMPLEX SUBUNIT 2"/>
    <property type="match status" value="1"/>
</dbReference>
<dbReference type="Pfam" id="PF22779">
    <property type="entry name" value="OB_SHLD2_2nd"/>
    <property type="match status" value="1"/>
</dbReference>
<dbReference type="Pfam" id="PF15793">
    <property type="entry name" value="SHLD2_C"/>
    <property type="match status" value="1"/>
</dbReference>
<dbReference type="Pfam" id="PF21669">
    <property type="entry name" value="SHLD2_OB1"/>
    <property type="match status" value="1"/>
</dbReference>
<protein>
    <recommendedName>
        <fullName evidence="1">Shieldin complex subunit 2</fullName>
    </recommendedName>
    <alternativeName>
        <fullName evidence="1">Protein FAM35A</fullName>
    </alternativeName>
    <alternativeName>
        <fullName>RINN1-REV7-interacting novel NHEJ regulator 2</fullName>
    </alternativeName>
</protein>
<keyword id="KW-0158">Chromosome</keyword>
<keyword id="KW-0227">DNA damage</keyword>
<keyword id="KW-0234">DNA repair</keyword>
<keyword id="KW-1185">Reference proteome</keyword>
<reference key="1">
    <citation type="submission" date="2004-11" db="EMBL/GenBank/DDBJ databases">
        <authorList>
            <consortium name="The German cDNA consortium"/>
        </authorList>
    </citation>
    <scope>NUCLEOTIDE SEQUENCE [LARGE SCALE MRNA]</scope>
    <source>
        <tissue>Kidney</tissue>
    </source>
</reference>
<gene>
    <name evidence="1" type="primary">SHLD2</name>
    <name evidence="1" type="synonym">FAM35A</name>
    <name evidence="1" type="synonym">RINN2</name>
</gene>
<comment type="function">
    <text evidence="1">Component of the shieldin complex, which plays an important role in repair of DNA double-stranded breaks (DSBs). During G1 and S phase of the cell cycle, the complex functions downstream of TP53BP1 to promote non-homologous end joining (NHEJ) and suppress DNA end resection. Mediates various NHEJ-dependent processes including immunoglobulin class-switch recombination, and fusion of unprotected telomeres.</text>
</comment>
<comment type="subunit">
    <text evidence="1">Component of the shieldin complex, consisting of SHLD1, SHLD2, SHLD3 and MAD2L2/REV7. Within the complex, SHLD2 forms a scaffold which interacts with a SHLD3-MAD2L2 subcomplex via its N-terminus, and with SHLD1 via its C-terminus. Interacts with TP53BP1. Interacts with RIF1. Interacts with ASTE1.</text>
</comment>
<comment type="subcellular location">
    <subcellularLocation>
        <location evidence="1">Chromosome</location>
    </subcellularLocation>
</comment>
<comment type="similarity">
    <text evidence="2">Belongs to the SHLD2 family.</text>
</comment>
<proteinExistence type="evidence at transcript level"/>
<sequence length="904" mass="101802">MSGGSQVHIFWGAPVAPLKMTVSQDTASLMSVADPWKKIHLLYSQHSLYLKDEKQHKNLENYEVPESVGSPDFSGHFLANCMNRHVHVKDDFVRSVSETQNIESQNIHSSRLSDITSSNMQICGFKSTVPHLTEEEKYQKLLSENKIIDEQPKHQSDICGQNFNTNLFQLGHKCAAMLDLVCSTEQINIGPEVVQRECVSTEYHEIQNQCLGLFSSNAVDKSRSEAAVRKASDLKISTDTEFLSIITSSQVAFLAQKKDKGRSPINKGNVNMETEPKASYREIRIPEENSIQLDGFTEAYEGGQNQAYSLELFSPVCRKTENSRIHINSDKGLEEHIGSQELFNSEDKLPPNEIHIELCSSGILCSQLNTFHKSAIKRSCTSEDKVGQSEALSRVLQVAKKMKLISNGGDSAVEMDRRNVSEFKGIKKTSLIKNCDSKSQKYNCLVMVLSPCHVKEINIKFGPNSGSKVPLATVTVIDQSETKKKVFLWRTAAFWAFTVFLGDIILLTDVVIREDQWVGETVLQSTFSSQLLNLGSYSSIQPEEYSSVVSDVVLQDLLAYVSSKHSYLRDLPPRQPQRVNSIDFVELEHLQPDVLVHAVLRVVDFTILTEAVYSYRGQKQKKVMLTVEQAQDQHYVLVLWGPGAAWYPQLQRKKGYIWEFKYLFVQRNYTLENLELHTTPWSSCECLFNDDIRAITFKAKFQKSAPSFVKIPDLATHLEDKCSGVVLIQAQISELAFPITAAQKIALNAHSSLKSIFSSLPNIVYTGCAKCGLELETDENRIYKQCFSCLPFTMKKIYYRPALMTVVDGRHDVCIRVESKLIEKILLNISADCLNRVIVPSSEITYGMVVADLFHSLLAVSAEPCVLKIQSLFVLDENSYPLQQDFSLLDFYSDIVKHGADARL</sequence>
<organism>
    <name type="scientific">Pongo abelii</name>
    <name type="common">Sumatran orangutan</name>
    <name type="synonym">Pongo pygmaeus abelii</name>
    <dbReference type="NCBI Taxonomy" id="9601"/>
    <lineage>
        <taxon>Eukaryota</taxon>
        <taxon>Metazoa</taxon>
        <taxon>Chordata</taxon>
        <taxon>Craniata</taxon>
        <taxon>Vertebrata</taxon>
        <taxon>Euteleostomi</taxon>
        <taxon>Mammalia</taxon>
        <taxon>Eutheria</taxon>
        <taxon>Euarchontoglires</taxon>
        <taxon>Primates</taxon>
        <taxon>Haplorrhini</taxon>
        <taxon>Catarrhini</taxon>
        <taxon>Hominidae</taxon>
        <taxon>Pongo</taxon>
    </lineage>
</organism>
<evidence type="ECO:0000250" key="1">
    <source>
        <dbReference type="UniProtKB" id="Q86V20"/>
    </source>
</evidence>
<evidence type="ECO:0000305" key="2"/>
<feature type="chain" id="PRO_0000087163" description="Shieldin complex subunit 2">
    <location>
        <begin position="1"/>
        <end position="904"/>
    </location>
</feature>
<feature type="region of interest" description="Interaction with ASTE1" evidence="1">
    <location>
        <begin position="1"/>
        <end position="568"/>
    </location>
</feature>
<feature type="region of interest" description="Sufficient for interaction with SHLD3 and MAD2L2" evidence="1">
    <location>
        <begin position="1"/>
        <end position="60"/>
    </location>
</feature>
<feature type="region of interest" description="Mediates interaction with SHLD1" evidence="1">
    <location>
        <begin position="721"/>
        <end position="891"/>
    </location>
</feature>
<accession>Q5RCM2</accession>